<reference key="1">
    <citation type="journal article" date="2000" name="Nucleic Acids Res.">
        <title>Genome sequences of Chlamydia trachomatis MoPn and Chlamydia pneumoniae AR39.</title>
        <authorList>
            <person name="Read T.D."/>
            <person name="Brunham R.C."/>
            <person name="Shen C."/>
            <person name="Gill S.R."/>
            <person name="Heidelberg J.F."/>
            <person name="White O."/>
            <person name="Hickey E.K."/>
            <person name="Peterson J.D."/>
            <person name="Utterback T.R."/>
            <person name="Berry K.J."/>
            <person name="Bass S."/>
            <person name="Linher K.D."/>
            <person name="Weidman J.F."/>
            <person name="Khouri H.M."/>
            <person name="Craven B."/>
            <person name="Bowman C."/>
            <person name="Dodson R.J."/>
            <person name="Gwinn M.L."/>
            <person name="Nelson W.C."/>
            <person name="DeBoy R.T."/>
            <person name="Kolonay J.F."/>
            <person name="McClarty G."/>
            <person name="Salzberg S.L."/>
            <person name="Eisen J.A."/>
            <person name="Fraser C.M."/>
        </authorList>
    </citation>
    <scope>NUCLEOTIDE SEQUENCE [LARGE SCALE GENOMIC DNA]</scope>
    <source>
        <strain>MoPn / Nigg</strain>
    </source>
</reference>
<name>SYI_CHLMU</name>
<organism>
    <name type="scientific">Chlamydia muridarum (strain MoPn / Nigg)</name>
    <dbReference type="NCBI Taxonomy" id="243161"/>
    <lineage>
        <taxon>Bacteria</taxon>
        <taxon>Pseudomonadati</taxon>
        <taxon>Chlamydiota</taxon>
        <taxon>Chlamydiia</taxon>
        <taxon>Chlamydiales</taxon>
        <taxon>Chlamydiaceae</taxon>
        <taxon>Chlamydia/Chlamydophila group</taxon>
        <taxon>Chlamydia</taxon>
    </lineage>
</organism>
<comment type="function">
    <text evidence="1">Catalyzes the attachment of isoleucine to tRNA(Ile). As IleRS can inadvertently accommodate and process structurally similar amino acids such as valine, to avoid such errors it has two additional distinct tRNA(Ile)-dependent editing activities. One activity is designated as 'pretransfer' editing and involves the hydrolysis of activated Val-AMP. The other activity is designated 'posttransfer' editing and involves deacylation of mischarged Val-tRNA(Ile).</text>
</comment>
<comment type="catalytic activity">
    <reaction evidence="1">
        <text>tRNA(Ile) + L-isoleucine + ATP = L-isoleucyl-tRNA(Ile) + AMP + diphosphate</text>
        <dbReference type="Rhea" id="RHEA:11060"/>
        <dbReference type="Rhea" id="RHEA-COMP:9666"/>
        <dbReference type="Rhea" id="RHEA-COMP:9695"/>
        <dbReference type="ChEBI" id="CHEBI:30616"/>
        <dbReference type="ChEBI" id="CHEBI:33019"/>
        <dbReference type="ChEBI" id="CHEBI:58045"/>
        <dbReference type="ChEBI" id="CHEBI:78442"/>
        <dbReference type="ChEBI" id="CHEBI:78528"/>
        <dbReference type="ChEBI" id="CHEBI:456215"/>
        <dbReference type="EC" id="6.1.1.5"/>
    </reaction>
</comment>
<comment type="cofactor">
    <cofactor evidence="1">
        <name>Zn(2+)</name>
        <dbReference type="ChEBI" id="CHEBI:29105"/>
    </cofactor>
</comment>
<comment type="subunit">
    <text evidence="1">Monomer.</text>
</comment>
<comment type="subcellular location">
    <subcellularLocation>
        <location evidence="1">Cytoplasm</location>
    </subcellularLocation>
</comment>
<comment type="domain">
    <text evidence="1">IleRS has two distinct active sites: one for aminoacylation and one for editing. The misactivated valine is translocated from the active site to the editing site, which sterically excludes the correctly activated isoleucine. The single editing site contains two valyl binding pockets, one specific for each substrate (Val-AMP or Val-tRNA(Ile)).</text>
</comment>
<comment type="similarity">
    <text evidence="1">Belongs to the class-I aminoacyl-tRNA synthetase family. IleS type 2 subfamily.</text>
</comment>
<dbReference type="EC" id="6.1.1.5" evidence="1"/>
<dbReference type="EMBL" id="AE002160">
    <property type="protein sequence ID" value="AAF39156.1"/>
    <property type="molecule type" value="Genomic_DNA"/>
</dbReference>
<dbReference type="PIR" id="F81719">
    <property type="entry name" value="F81719"/>
</dbReference>
<dbReference type="RefSeq" id="WP_010230051.1">
    <property type="nucleotide sequence ID" value="NZ_CP063055.1"/>
</dbReference>
<dbReference type="SMR" id="Q9PL20"/>
<dbReference type="GeneID" id="1246458"/>
<dbReference type="KEGG" id="cmu:TC_0288"/>
<dbReference type="eggNOG" id="COG0060">
    <property type="taxonomic scope" value="Bacteria"/>
</dbReference>
<dbReference type="HOGENOM" id="CLU_001493_1_1_0"/>
<dbReference type="OrthoDB" id="9810365at2"/>
<dbReference type="Proteomes" id="UP000000800">
    <property type="component" value="Chromosome"/>
</dbReference>
<dbReference type="GO" id="GO:0005737">
    <property type="term" value="C:cytoplasm"/>
    <property type="evidence" value="ECO:0007669"/>
    <property type="project" value="UniProtKB-SubCell"/>
</dbReference>
<dbReference type="GO" id="GO:0002161">
    <property type="term" value="F:aminoacyl-tRNA deacylase activity"/>
    <property type="evidence" value="ECO:0007669"/>
    <property type="project" value="InterPro"/>
</dbReference>
<dbReference type="GO" id="GO:0005524">
    <property type="term" value="F:ATP binding"/>
    <property type="evidence" value="ECO:0007669"/>
    <property type="project" value="UniProtKB-UniRule"/>
</dbReference>
<dbReference type="GO" id="GO:0004822">
    <property type="term" value="F:isoleucine-tRNA ligase activity"/>
    <property type="evidence" value="ECO:0007669"/>
    <property type="project" value="UniProtKB-UniRule"/>
</dbReference>
<dbReference type="GO" id="GO:0000049">
    <property type="term" value="F:tRNA binding"/>
    <property type="evidence" value="ECO:0007669"/>
    <property type="project" value="InterPro"/>
</dbReference>
<dbReference type="GO" id="GO:0008270">
    <property type="term" value="F:zinc ion binding"/>
    <property type="evidence" value="ECO:0007669"/>
    <property type="project" value="UniProtKB-UniRule"/>
</dbReference>
<dbReference type="GO" id="GO:0006428">
    <property type="term" value="P:isoleucyl-tRNA aminoacylation"/>
    <property type="evidence" value="ECO:0007669"/>
    <property type="project" value="UniProtKB-UniRule"/>
</dbReference>
<dbReference type="CDD" id="cd07961">
    <property type="entry name" value="Anticodon_Ia_Ile_ABEc"/>
    <property type="match status" value="1"/>
</dbReference>
<dbReference type="CDD" id="cd00818">
    <property type="entry name" value="IleRS_core"/>
    <property type="match status" value="1"/>
</dbReference>
<dbReference type="FunFam" id="3.40.50.620:FF:000241">
    <property type="entry name" value="Isoleucine--tRNA ligase"/>
    <property type="match status" value="1"/>
</dbReference>
<dbReference type="FunFam" id="3.40.50.620:FF:000133">
    <property type="entry name" value="Isoleucyl-tRNA synthetase, cytoplasmic"/>
    <property type="match status" value="1"/>
</dbReference>
<dbReference type="Gene3D" id="3.40.50.620">
    <property type="entry name" value="HUPs"/>
    <property type="match status" value="2"/>
</dbReference>
<dbReference type="Gene3D" id="1.10.730.10">
    <property type="entry name" value="Isoleucyl-tRNA Synthetase, Domain 1"/>
    <property type="match status" value="1"/>
</dbReference>
<dbReference type="Gene3D" id="3.90.740.10">
    <property type="entry name" value="Valyl/Leucyl/Isoleucyl-tRNA synthetase, editing domain"/>
    <property type="match status" value="1"/>
</dbReference>
<dbReference type="HAMAP" id="MF_02003">
    <property type="entry name" value="Ile_tRNA_synth_type2"/>
    <property type="match status" value="1"/>
</dbReference>
<dbReference type="InterPro" id="IPR001412">
    <property type="entry name" value="aa-tRNA-synth_I_CS"/>
</dbReference>
<dbReference type="InterPro" id="IPR002300">
    <property type="entry name" value="aa-tRNA-synth_Ia"/>
</dbReference>
<dbReference type="InterPro" id="IPR033709">
    <property type="entry name" value="Anticodon_Ile_ABEc"/>
</dbReference>
<dbReference type="InterPro" id="IPR002301">
    <property type="entry name" value="Ile-tRNA-ligase"/>
</dbReference>
<dbReference type="InterPro" id="IPR023586">
    <property type="entry name" value="Ile-tRNA-ligase_type2"/>
</dbReference>
<dbReference type="InterPro" id="IPR013155">
    <property type="entry name" value="M/V/L/I-tRNA-synth_anticd-bd"/>
</dbReference>
<dbReference type="InterPro" id="IPR014729">
    <property type="entry name" value="Rossmann-like_a/b/a_fold"/>
</dbReference>
<dbReference type="InterPro" id="IPR009080">
    <property type="entry name" value="tRNAsynth_Ia_anticodon-bd"/>
</dbReference>
<dbReference type="InterPro" id="IPR009008">
    <property type="entry name" value="Val/Leu/Ile-tRNA-synth_edit"/>
</dbReference>
<dbReference type="NCBIfam" id="TIGR00392">
    <property type="entry name" value="ileS"/>
    <property type="match status" value="1"/>
</dbReference>
<dbReference type="PANTHER" id="PTHR42780:SF1">
    <property type="entry name" value="ISOLEUCINE--TRNA LIGASE, CYTOPLASMIC"/>
    <property type="match status" value="1"/>
</dbReference>
<dbReference type="PANTHER" id="PTHR42780">
    <property type="entry name" value="SOLEUCYL-TRNA SYNTHETASE"/>
    <property type="match status" value="1"/>
</dbReference>
<dbReference type="Pfam" id="PF08264">
    <property type="entry name" value="Anticodon_1"/>
    <property type="match status" value="1"/>
</dbReference>
<dbReference type="Pfam" id="PF19302">
    <property type="entry name" value="DUF5915"/>
    <property type="match status" value="1"/>
</dbReference>
<dbReference type="Pfam" id="PF00133">
    <property type="entry name" value="tRNA-synt_1"/>
    <property type="match status" value="1"/>
</dbReference>
<dbReference type="PRINTS" id="PR00984">
    <property type="entry name" value="TRNASYNTHILE"/>
</dbReference>
<dbReference type="SUPFAM" id="SSF47323">
    <property type="entry name" value="Anticodon-binding domain of a subclass of class I aminoacyl-tRNA synthetases"/>
    <property type="match status" value="2"/>
</dbReference>
<dbReference type="SUPFAM" id="SSF52374">
    <property type="entry name" value="Nucleotidylyl transferase"/>
    <property type="match status" value="1"/>
</dbReference>
<dbReference type="SUPFAM" id="SSF50677">
    <property type="entry name" value="ValRS/IleRS/LeuRS editing domain"/>
    <property type="match status" value="1"/>
</dbReference>
<dbReference type="PROSITE" id="PS00178">
    <property type="entry name" value="AA_TRNA_LIGASE_I"/>
    <property type="match status" value="1"/>
</dbReference>
<keyword id="KW-0030">Aminoacyl-tRNA synthetase</keyword>
<keyword id="KW-0067">ATP-binding</keyword>
<keyword id="KW-0963">Cytoplasm</keyword>
<keyword id="KW-0436">Ligase</keyword>
<keyword id="KW-0479">Metal-binding</keyword>
<keyword id="KW-0547">Nucleotide-binding</keyword>
<keyword id="KW-0648">Protein biosynthesis</keyword>
<keyword id="KW-0862">Zinc</keyword>
<sequence>MDNEDKVSFPAKEEKVLTFWKEQNIFQKTLENRDGSPTFSFYDGPPFATGLPHYGHLLAGTIKDVVCRYATMDGHYVPRRFGWDCHGVPVEYEVEKSLGLTEPGAIDRFGIANFNEECRKIVFRYVDEWKYFVDRIGRWVDFSATWKTMDLSFMESVWWVFHSLYKQGLVYEGTKVVPFSTKLGTPLSNFEAGQNYKEVDDPSVVAKFALQDDQGILLAWTTTPWTLVSNMALAVHPGLTYVRIQDKESGEEYILGQESLARWFPDRESYKWIGQLSGESLVGRRYCPLFPYFQDQQDRGAFRVIPADFIEESEGTGVVHMAPAFGEADFFACQEHNVPLVCPVDNQGCFTSEVTDFVGEYIKFADKGIARRLKNENKLFYQGTIRHRYPFCWRTDSPLIYKAVNSWFVSVEKVKHKMLKANESIHWTPGHIKHGRFGKWLEGARDWAISRNRYWGTPIPIWRSEDGELLVIRSIQELEELSGQKIVDLHRHFIDEIVIHKNGKSFHRIPYVFDCWFDSGAMPYAQNHYPFERAEETEARFPADFIAEGLDQTRGWFYTLTVIAAALFDQPAFKNVIVNGIVLAEDGNKMSKRLNNYPSPKKIMDTYGADALRLYLLNSVVVKAEDLRFSDKGVEAVLKQVLLPLSNALAFYKTYAELYGFSPNETTDLELAEIDRWILSSLYSLVGKTRENMAQYDLHAAVSPFIDFIEDLTNWYIRRSRRRFWESEDSPDRRAAFATLYEVLMVFSKIIAPFIPFTAEDMYQQLRVETDPESVHLCDFPHVVLEKILPDLEKKMQDIREIVALGHSLRKEHKLKVRQPLQHMYIVGAKERMAALAQVDSLIGEELNVKEVHFCSETPEYVTTLVKPNFRSLGKRVGNRLPEIQKALAGLSQEQIQAFMHNGFMVLSLGEETISLNEEDITVSWEAAPGFVARSSASFVAILDCQLTSPLIMEGIAREIVNKINTMRRNGKLHVSDRIAIRLHAPKIVQEAFSQYEEYICEETLTTSVSFIDDKEGEEWDVNGHAVSLSLEVIGH</sequence>
<evidence type="ECO:0000255" key="1">
    <source>
        <dbReference type="HAMAP-Rule" id="MF_02003"/>
    </source>
</evidence>
<accession>Q9PL20</accession>
<feature type="chain" id="PRO_0000098527" description="Isoleucine--tRNA ligase">
    <location>
        <begin position="1"/>
        <end position="1036"/>
    </location>
</feature>
<feature type="short sequence motif" description="'HIGH' region">
    <location>
        <begin position="46"/>
        <end position="56"/>
    </location>
</feature>
<feature type="short sequence motif" description="'KMSKS' region">
    <location>
        <begin position="589"/>
        <end position="593"/>
    </location>
</feature>
<feature type="binding site" evidence="1">
    <location>
        <position position="592"/>
    </location>
    <ligand>
        <name>ATP</name>
        <dbReference type="ChEBI" id="CHEBI:30616"/>
    </ligand>
</feature>
<proteinExistence type="inferred from homology"/>
<gene>
    <name evidence="1" type="primary">ileS</name>
    <name type="ordered locus">TC_0288</name>
</gene>
<protein>
    <recommendedName>
        <fullName evidence="1">Isoleucine--tRNA ligase</fullName>
        <ecNumber evidence="1">6.1.1.5</ecNumber>
    </recommendedName>
    <alternativeName>
        <fullName evidence="1">Isoleucyl-tRNA synthetase</fullName>
        <shortName evidence="1">IleRS</shortName>
    </alternativeName>
</protein>